<dbReference type="EMBL" id="AE015924">
    <property type="protein sequence ID" value="AAQ65603.1"/>
    <property type="molecule type" value="Genomic_DNA"/>
</dbReference>
<dbReference type="RefSeq" id="WP_005873835.1">
    <property type="nucleotide sequence ID" value="NC_002950.2"/>
</dbReference>
<dbReference type="SMR" id="Q7MX24"/>
<dbReference type="STRING" id="242619.PG_0398"/>
<dbReference type="DNASU" id="2551893"/>
<dbReference type="EnsemblBacteria" id="AAQ65603">
    <property type="protein sequence ID" value="AAQ65603"/>
    <property type="gene ID" value="PG_0398"/>
</dbReference>
<dbReference type="KEGG" id="pgi:PG_0398"/>
<dbReference type="PATRIC" id="fig|242619.8.peg.365"/>
<dbReference type="eggNOG" id="COG1195">
    <property type="taxonomic scope" value="Bacteria"/>
</dbReference>
<dbReference type="HOGENOM" id="CLU_040267_0_1_10"/>
<dbReference type="BioCyc" id="PGIN242619:G1G02-373-MONOMER"/>
<dbReference type="Proteomes" id="UP000000588">
    <property type="component" value="Chromosome"/>
</dbReference>
<dbReference type="GO" id="GO:0005737">
    <property type="term" value="C:cytoplasm"/>
    <property type="evidence" value="ECO:0007669"/>
    <property type="project" value="UniProtKB-SubCell"/>
</dbReference>
<dbReference type="GO" id="GO:0005524">
    <property type="term" value="F:ATP binding"/>
    <property type="evidence" value="ECO:0007669"/>
    <property type="project" value="UniProtKB-UniRule"/>
</dbReference>
<dbReference type="GO" id="GO:0003697">
    <property type="term" value="F:single-stranded DNA binding"/>
    <property type="evidence" value="ECO:0007669"/>
    <property type="project" value="UniProtKB-UniRule"/>
</dbReference>
<dbReference type="GO" id="GO:0006260">
    <property type="term" value="P:DNA replication"/>
    <property type="evidence" value="ECO:0007669"/>
    <property type="project" value="UniProtKB-UniRule"/>
</dbReference>
<dbReference type="GO" id="GO:0000731">
    <property type="term" value="P:DNA synthesis involved in DNA repair"/>
    <property type="evidence" value="ECO:0007669"/>
    <property type="project" value="TreeGrafter"/>
</dbReference>
<dbReference type="GO" id="GO:0006302">
    <property type="term" value="P:double-strand break repair"/>
    <property type="evidence" value="ECO:0007669"/>
    <property type="project" value="TreeGrafter"/>
</dbReference>
<dbReference type="GO" id="GO:0009432">
    <property type="term" value="P:SOS response"/>
    <property type="evidence" value="ECO:0007669"/>
    <property type="project" value="UniProtKB-UniRule"/>
</dbReference>
<dbReference type="Gene3D" id="3.40.50.300">
    <property type="entry name" value="P-loop containing nucleotide triphosphate hydrolases"/>
    <property type="match status" value="1"/>
</dbReference>
<dbReference type="Gene3D" id="1.20.1050.90">
    <property type="entry name" value="RecF/RecN/SMC, N-terminal domain"/>
    <property type="match status" value="1"/>
</dbReference>
<dbReference type="HAMAP" id="MF_00365">
    <property type="entry name" value="RecF"/>
    <property type="match status" value="1"/>
</dbReference>
<dbReference type="InterPro" id="IPR001238">
    <property type="entry name" value="DNA-binding_RecF"/>
</dbReference>
<dbReference type="InterPro" id="IPR018078">
    <property type="entry name" value="DNA-binding_RecF_CS"/>
</dbReference>
<dbReference type="InterPro" id="IPR027417">
    <property type="entry name" value="P-loop_NTPase"/>
</dbReference>
<dbReference type="InterPro" id="IPR003395">
    <property type="entry name" value="RecF/RecN/SMC_N"/>
</dbReference>
<dbReference type="InterPro" id="IPR042174">
    <property type="entry name" value="RecF_2"/>
</dbReference>
<dbReference type="NCBIfam" id="TIGR00611">
    <property type="entry name" value="recf"/>
    <property type="match status" value="1"/>
</dbReference>
<dbReference type="PANTHER" id="PTHR32182">
    <property type="entry name" value="DNA REPLICATION AND REPAIR PROTEIN RECF"/>
    <property type="match status" value="1"/>
</dbReference>
<dbReference type="PANTHER" id="PTHR32182:SF0">
    <property type="entry name" value="DNA REPLICATION AND REPAIR PROTEIN RECF"/>
    <property type="match status" value="1"/>
</dbReference>
<dbReference type="Pfam" id="PF02463">
    <property type="entry name" value="SMC_N"/>
    <property type="match status" value="1"/>
</dbReference>
<dbReference type="SUPFAM" id="SSF52540">
    <property type="entry name" value="P-loop containing nucleoside triphosphate hydrolases"/>
    <property type="match status" value="1"/>
</dbReference>
<dbReference type="PROSITE" id="PS00617">
    <property type="entry name" value="RECF_1"/>
    <property type="match status" value="1"/>
</dbReference>
<dbReference type="PROSITE" id="PS00618">
    <property type="entry name" value="RECF_2"/>
    <property type="match status" value="1"/>
</dbReference>
<protein>
    <recommendedName>
        <fullName evidence="1">DNA replication and repair protein RecF</fullName>
    </recommendedName>
</protein>
<keyword id="KW-0067">ATP-binding</keyword>
<keyword id="KW-0963">Cytoplasm</keyword>
<keyword id="KW-0227">DNA damage</keyword>
<keyword id="KW-0234">DNA repair</keyword>
<keyword id="KW-0235">DNA replication</keyword>
<keyword id="KW-0238">DNA-binding</keyword>
<keyword id="KW-0547">Nucleotide-binding</keyword>
<keyword id="KW-1185">Reference proteome</keyword>
<keyword id="KW-0742">SOS response</keyword>
<proteinExistence type="inferred from homology"/>
<comment type="function">
    <text evidence="1">The RecF protein is involved in DNA metabolism; it is required for DNA replication and normal SOS inducibility. RecF binds preferentially to single-stranded, linear DNA. It also seems to bind ATP.</text>
</comment>
<comment type="subcellular location">
    <subcellularLocation>
        <location evidence="1">Cytoplasm</location>
    </subcellularLocation>
</comment>
<comment type="similarity">
    <text evidence="1">Belongs to the RecF family.</text>
</comment>
<gene>
    <name evidence="1" type="primary">recF</name>
    <name type="ordered locus">PG_0398</name>
</gene>
<sequence>MIIEELHIVNFKSIAAADCRFSPKVNCLVGNNGMGKTNLLDALHFLSFCRSHLSVPDNMVVRHGEEMALLQGLYRDESGDGIELLLSIRPGKHKVLRRNKKEYERLSDHIGRFPLVIVSPQDYQLILGGSDERRRFMDQQLCQQDPRYLSALIQYNRHLQQRNTMLKQDRHDDALMDVLELQMGSYAAEICNKRSRFIEDFLPVFNDLYSDISGSAEKVSLSYRSHLADGIPLEELLRRSRPKDYLLGFSSCGVHKDELEMLLGGVLIRKIGSEGQNKTFLISMKLAQFRHQQLHGDETPILLLDDIFDKLDATRVERIIRLVGGNGFGQIFITDTNRKNLDEIIASWSEDYRLFKIENGQIFQ</sequence>
<organism>
    <name type="scientific">Porphyromonas gingivalis (strain ATCC BAA-308 / W83)</name>
    <dbReference type="NCBI Taxonomy" id="242619"/>
    <lineage>
        <taxon>Bacteria</taxon>
        <taxon>Pseudomonadati</taxon>
        <taxon>Bacteroidota</taxon>
        <taxon>Bacteroidia</taxon>
        <taxon>Bacteroidales</taxon>
        <taxon>Porphyromonadaceae</taxon>
        <taxon>Porphyromonas</taxon>
    </lineage>
</organism>
<reference key="1">
    <citation type="journal article" date="2003" name="J. Bacteriol.">
        <title>Complete genome sequence of the oral pathogenic bacterium Porphyromonas gingivalis strain W83.</title>
        <authorList>
            <person name="Nelson K.E."/>
            <person name="Fleischmann R.D."/>
            <person name="DeBoy R.T."/>
            <person name="Paulsen I.T."/>
            <person name="Fouts D.E."/>
            <person name="Eisen J.A."/>
            <person name="Daugherty S.C."/>
            <person name="Dodson R.J."/>
            <person name="Durkin A.S."/>
            <person name="Gwinn M.L."/>
            <person name="Haft D.H."/>
            <person name="Kolonay J.F."/>
            <person name="Nelson W.C."/>
            <person name="Mason T.M."/>
            <person name="Tallon L."/>
            <person name="Gray J."/>
            <person name="Granger D."/>
            <person name="Tettelin H."/>
            <person name="Dong H."/>
            <person name="Galvin J.L."/>
            <person name="Duncan M.J."/>
            <person name="Dewhirst F.E."/>
            <person name="Fraser C.M."/>
        </authorList>
    </citation>
    <scope>NUCLEOTIDE SEQUENCE [LARGE SCALE GENOMIC DNA]</scope>
    <source>
        <strain>ATCC BAA-308 / W83</strain>
    </source>
</reference>
<name>RECF_PORGI</name>
<evidence type="ECO:0000255" key="1">
    <source>
        <dbReference type="HAMAP-Rule" id="MF_00365"/>
    </source>
</evidence>
<feature type="chain" id="PRO_0000196440" description="DNA replication and repair protein RecF">
    <location>
        <begin position="1"/>
        <end position="364"/>
    </location>
</feature>
<feature type="binding site" evidence="1">
    <location>
        <begin position="30"/>
        <end position="37"/>
    </location>
    <ligand>
        <name>ATP</name>
        <dbReference type="ChEBI" id="CHEBI:30616"/>
    </ligand>
</feature>
<accession>Q7MX24</accession>